<gene>
    <name type="primary">SRK2D</name>
    <name type="synonym">OSKL3</name>
    <name type="synonym">SNRK2.2</name>
    <name type="synonym">SPK2</name>
    <name type="ordered locus">At3g50500</name>
    <name type="ORF">T20E23.100</name>
</gene>
<name>SRK2D_ARATH</name>
<comment type="function">
    <text evidence="5 8">Together with SRK2I, key component and activator of the abscisic acid (ABA) signaling pathway that regulates numerous ABA responses, such as seed germination, Pro accumulation, root growth inhibition, dormancy and seedling growth, and, to a lesser extent, stomatal closure (PubMed:17307925). In response to ABA, phosphorylates the ESCRT-I complex component FREE1, which is required for ABA-induced FREE1 nuclear import (PubMed:30962512).</text>
</comment>
<comment type="catalytic activity">
    <reaction>
        <text>L-seryl-[protein] + ATP = O-phospho-L-seryl-[protein] + ADP + H(+)</text>
        <dbReference type="Rhea" id="RHEA:17989"/>
        <dbReference type="Rhea" id="RHEA-COMP:9863"/>
        <dbReference type="Rhea" id="RHEA-COMP:11604"/>
        <dbReference type="ChEBI" id="CHEBI:15378"/>
        <dbReference type="ChEBI" id="CHEBI:29999"/>
        <dbReference type="ChEBI" id="CHEBI:30616"/>
        <dbReference type="ChEBI" id="CHEBI:83421"/>
        <dbReference type="ChEBI" id="CHEBI:456216"/>
        <dbReference type="EC" id="2.7.11.1"/>
    </reaction>
</comment>
<comment type="catalytic activity">
    <reaction>
        <text>L-threonyl-[protein] + ATP = O-phospho-L-threonyl-[protein] + ADP + H(+)</text>
        <dbReference type="Rhea" id="RHEA:46608"/>
        <dbReference type="Rhea" id="RHEA-COMP:11060"/>
        <dbReference type="Rhea" id="RHEA-COMP:11605"/>
        <dbReference type="ChEBI" id="CHEBI:15378"/>
        <dbReference type="ChEBI" id="CHEBI:30013"/>
        <dbReference type="ChEBI" id="CHEBI:30616"/>
        <dbReference type="ChEBI" id="CHEBI:61977"/>
        <dbReference type="ChEBI" id="CHEBI:456216"/>
        <dbReference type="EC" id="2.7.11.1"/>
    </reaction>
</comment>
<comment type="subunit">
    <text evidence="6 7 8">Interacts with ABI1 (PubMed:19874541). Interacts with I-2, TOPP1 and TOPP2 (PubMed:26943172). Interacts with FREE1 (via C-terminus) (PubMed:30962512).</text>
</comment>
<comment type="interaction">
    <interactant intactId="EBI-2363308">
        <id>Q39192</id>
    </interactant>
    <interactant intactId="EBI-782526">
        <id>P49597</id>
        <label>ABI1</label>
    </interactant>
    <organismsDiffer>false</organismsDiffer>
    <experiments>7</experiments>
</comment>
<comment type="interaction">
    <interactant intactId="EBI-2363308">
        <id>Q39192</id>
    </interactant>
    <interactant intactId="EBI-15803514">
        <id>O04719-1</id>
        <label>ABI2</label>
    </interactant>
    <organismsDiffer>false</organismsDiffer>
    <experiments>2</experiments>
</comment>
<comment type="interaction">
    <interactant intactId="EBI-2363308">
        <id>Q39192</id>
    </interactant>
    <interactant intactId="EBI-2363348">
        <id>Q9FLI3</id>
        <label>AHG1</label>
    </interactant>
    <organismsDiffer>false</organismsDiffer>
    <experiments>2</experiments>
</comment>
<comment type="interaction">
    <interactant intactId="EBI-2363308">
        <id>Q39192</id>
    </interactant>
    <interactant intactId="EBI-2309302">
        <id>Q9CAJ0</id>
        <label>HAB1</label>
    </interactant>
    <organismsDiffer>false</organismsDiffer>
    <experiments>2</experiments>
</comment>
<comment type="alternative products">
    <event type="alternative splicing"/>
    <isoform>
        <id>Q39192-1</id>
        <name>1</name>
        <sequence type="displayed"/>
    </isoform>
    <text>A number of isoforms are produced. According to EST sequences.</text>
</comment>
<comment type="tissue specificity">
    <text evidence="3 5">Expressed in seeds, seedlings, roots (especially in tips), stems, leaves, shoots, flowers and siliques.</text>
</comment>
<comment type="induction">
    <text evidence="3 4">By abscisic acid (ABA), salt, and osmotic stress (at protein level).</text>
</comment>
<comment type="similarity">
    <text evidence="1">Belongs to the protein kinase superfamily. Ser/Thr protein kinase family.</text>
</comment>
<comment type="sequence caution" evidence="9">
    <conflict type="frameshift">
        <sequence resource="EMBL-CDS" id="AAL14386"/>
    </conflict>
</comment>
<sequence>MDPATNSPIMPIDLPIMHDSDRYDFVKDIGSGNFGVARLMTDRVTKELVAVKYIERGEKIDENVQREIINHRSLRHPNIVRFKEVILTPSHLAIVMEYAAGGELYERICNAGRFSEDEARFFFQQLISGVSYCHAMQICHRDLKLENTLLDGSPAPRLKICDFGYSKSSVLHSQPKSTVGTPAYIAPEILLRQEYDGKLADVWSCGVTLYVMLVGAYPFEDPQEPRDYRKTIQRILSVTYSIPEDLHLSPECRHLISRIFVADPATRITIPEITSDKWFLKNLPGDLMDENRMGSQFQEPEQPMQSLDTIMQIISEATIPTVRNRCLDDFMADNLDLDDDMDDFDSESEIDVDSSGEIVYAL</sequence>
<proteinExistence type="evidence at protein level"/>
<protein>
    <recommendedName>
        <fullName>Serine/threonine-protein kinase SRK2D</fullName>
        <ecNumber>2.7.11.1</ecNumber>
    </recommendedName>
    <alternativeName>
        <fullName>OST1-kinase-like 3</fullName>
    </alternativeName>
    <alternativeName>
        <fullName>Protein ATHPROKIN A</fullName>
    </alternativeName>
    <alternativeName>
        <fullName>SNF1-related kinase 2.2</fullName>
        <shortName>SnRK2.2</shortName>
    </alternativeName>
</protein>
<organism>
    <name type="scientific">Arabidopsis thaliana</name>
    <name type="common">Mouse-ear cress</name>
    <dbReference type="NCBI Taxonomy" id="3702"/>
    <lineage>
        <taxon>Eukaryota</taxon>
        <taxon>Viridiplantae</taxon>
        <taxon>Streptophyta</taxon>
        <taxon>Embryophyta</taxon>
        <taxon>Tracheophyta</taxon>
        <taxon>Spermatophyta</taxon>
        <taxon>Magnoliopsida</taxon>
        <taxon>eudicotyledons</taxon>
        <taxon>Gunneridae</taxon>
        <taxon>Pentapetalae</taxon>
        <taxon>rosids</taxon>
        <taxon>malvids</taxon>
        <taxon>Brassicales</taxon>
        <taxon>Brassicaceae</taxon>
        <taxon>Camelineae</taxon>
        <taxon>Arabidopsis</taxon>
    </lineage>
</organism>
<dbReference type="EC" id="2.7.11.1"/>
<dbReference type="EMBL" id="L05561">
    <property type="protein sequence ID" value="AAA32845.1"/>
    <property type="molecule type" value="mRNA"/>
</dbReference>
<dbReference type="EMBL" id="AL133363">
    <property type="protein sequence ID" value="CAB62479.1"/>
    <property type="molecule type" value="Genomic_DNA"/>
</dbReference>
<dbReference type="EMBL" id="CP002686">
    <property type="protein sequence ID" value="AEE78672.1"/>
    <property type="molecule type" value="Genomic_DNA"/>
</dbReference>
<dbReference type="EMBL" id="AY057591">
    <property type="protein sequence ID" value="AAL14386.1"/>
    <property type="status" value="ALT_FRAME"/>
    <property type="molecule type" value="mRNA"/>
</dbReference>
<dbReference type="EMBL" id="BT025246">
    <property type="protein sequence ID" value="ABF18999.1"/>
    <property type="molecule type" value="mRNA"/>
</dbReference>
<dbReference type="EMBL" id="AY087953">
    <property type="protein sequence ID" value="AAM65501.1"/>
    <property type="molecule type" value="mRNA"/>
</dbReference>
<dbReference type="PIR" id="S56718">
    <property type="entry name" value="S56718"/>
</dbReference>
<dbReference type="RefSeq" id="NP_190619.1">
    <molecule id="Q39192-1"/>
    <property type="nucleotide sequence ID" value="NM_114910.3"/>
</dbReference>
<dbReference type="SMR" id="Q39192"/>
<dbReference type="BioGRID" id="9532">
    <property type="interactions" value="16"/>
</dbReference>
<dbReference type="DIP" id="DIP-48985N"/>
<dbReference type="FunCoup" id="Q39192">
    <property type="interactions" value="1562"/>
</dbReference>
<dbReference type="IntAct" id="Q39192">
    <property type="interactions" value="15"/>
</dbReference>
<dbReference type="STRING" id="3702.Q39192"/>
<dbReference type="iPTMnet" id="Q39192"/>
<dbReference type="PaxDb" id="3702-AT3G50500.2"/>
<dbReference type="ProteomicsDB" id="226873">
    <molecule id="Q39192-1"/>
</dbReference>
<dbReference type="EnsemblPlants" id="AT3G50500.1">
    <molecule id="Q39192-1"/>
    <property type="protein sequence ID" value="AT3G50500.1"/>
    <property type="gene ID" value="AT3G50500"/>
</dbReference>
<dbReference type="GeneID" id="824214"/>
<dbReference type="Gramene" id="AT3G50500.1">
    <molecule id="Q39192-1"/>
    <property type="protein sequence ID" value="AT3G50500.1"/>
    <property type="gene ID" value="AT3G50500"/>
</dbReference>
<dbReference type="KEGG" id="ath:AT3G50500"/>
<dbReference type="Araport" id="AT3G50500"/>
<dbReference type="TAIR" id="AT3G50500">
    <property type="gene designation" value="SNRK2.2"/>
</dbReference>
<dbReference type="eggNOG" id="KOG0583">
    <property type="taxonomic scope" value="Eukaryota"/>
</dbReference>
<dbReference type="HOGENOM" id="CLU_000288_63_0_1"/>
<dbReference type="InParanoid" id="Q39192"/>
<dbReference type="OrthoDB" id="193931at2759"/>
<dbReference type="PhylomeDB" id="Q39192"/>
<dbReference type="PRO" id="PR:Q39192"/>
<dbReference type="Proteomes" id="UP000006548">
    <property type="component" value="Chromosome 3"/>
</dbReference>
<dbReference type="ExpressionAtlas" id="Q39192">
    <property type="expression patterns" value="baseline and differential"/>
</dbReference>
<dbReference type="GO" id="GO:0005524">
    <property type="term" value="F:ATP binding"/>
    <property type="evidence" value="ECO:0007669"/>
    <property type="project" value="UniProtKB-KW"/>
</dbReference>
<dbReference type="GO" id="GO:0106310">
    <property type="term" value="F:protein serine kinase activity"/>
    <property type="evidence" value="ECO:0007669"/>
    <property type="project" value="RHEA"/>
</dbReference>
<dbReference type="GO" id="GO:0004674">
    <property type="term" value="F:protein serine/threonine kinase activity"/>
    <property type="evidence" value="ECO:0007669"/>
    <property type="project" value="UniProtKB-KW"/>
</dbReference>
<dbReference type="GO" id="GO:0009738">
    <property type="term" value="P:abscisic acid-activated signaling pathway"/>
    <property type="evidence" value="ECO:0007669"/>
    <property type="project" value="UniProtKB-KW"/>
</dbReference>
<dbReference type="GO" id="GO:0006970">
    <property type="term" value="P:response to osmotic stress"/>
    <property type="evidence" value="ECO:0007669"/>
    <property type="project" value="UniProtKB-ARBA"/>
</dbReference>
<dbReference type="CDD" id="cd14665">
    <property type="entry name" value="STKc_SnRK2-3"/>
    <property type="match status" value="1"/>
</dbReference>
<dbReference type="FunFam" id="1.10.510.10:FF:000085">
    <property type="entry name" value="Serine/threonine-protein kinase SRK2E"/>
    <property type="match status" value="1"/>
</dbReference>
<dbReference type="FunFam" id="3.30.200.20:FF:000045">
    <property type="entry name" value="Serine/threonine-protein kinase SRK2E"/>
    <property type="match status" value="1"/>
</dbReference>
<dbReference type="Gene3D" id="3.30.200.20">
    <property type="entry name" value="Phosphorylase Kinase, domain 1"/>
    <property type="match status" value="1"/>
</dbReference>
<dbReference type="Gene3D" id="1.10.510.10">
    <property type="entry name" value="Transferase(Phosphotransferase) domain 1"/>
    <property type="match status" value="1"/>
</dbReference>
<dbReference type="InterPro" id="IPR011009">
    <property type="entry name" value="Kinase-like_dom_sf"/>
</dbReference>
<dbReference type="InterPro" id="IPR000719">
    <property type="entry name" value="Prot_kinase_dom"/>
</dbReference>
<dbReference type="InterPro" id="IPR017441">
    <property type="entry name" value="Protein_kinase_ATP_BS"/>
</dbReference>
<dbReference type="InterPro" id="IPR008271">
    <property type="entry name" value="Ser/Thr_kinase_AS"/>
</dbReference>
<dbReference type="PANTHER" id="PTHR24343">
    <property type="entry name" value="SERINE/THREONINE KINASE"/>
    <property type="match status" value="1"/>
</dbReference>
<dbReference type="PANTHER" id="PTHR24343:SF485">
    <property type="entry name" value="SERINE_THREONINE-PROTEIN KINASE SRK2D"/>
    <property type="match status" value="1"/>
</dbReference>
<dbReference type="Pfam" id="PF00069">
    <property type="entry name" value="Pkinase"/>
    <property type="match status" value="1"/>
</dbReference>
<dbReference type="SMART" id="SM00220">
    <property type="entry name" value="S_TKc"/>
    <property type="match status" value="1"/>
</dbReference>
<dbReference type="SUPFAM" id="SSF56112">
    <property type="entry name" value="Protein kinase-like (PK-like)"/>
    <property type="match status" value="1"/>
</dbReference>
<dbReference type="PROSITE" id="PS00107">
    <property type="entry name" value="PROTEIN_KINASE_ATP"/>
    <property type="match status" value="1"/>
</dbReference>
<dbReference type="PROSITE" id="PS50011">
    <property type="entry name" value="PROTEIN_KINASE_DOM"/>
    <property type="match status" value="1"/>
</dbReference>
<dbReference type="PROSITE" id="PS00108">
    <property type="entry name" value="PROTEIN_KINASE_ST"/>
    <property type="match status" value="1"/>
</dbReference>
<evidence type="ECO:0000255" key="1">
    <source>
        <dbReference type="PROSITE-ProRule" id="PRU00159"/>
    </source>
</evidence>
<evidence type="ECO:0000255" key="2">
    <source>
        <dbReference type="PROSITE-ProRule" id="PRU10027"/>
    </source>
</evidence>
<evidence type="ECO:0000269" key="3">
    <source>
    </source>
</evidence>
<evidence type="ECO:0000269" key="4">
    <source>
    </source>
</evidence>
<evidence type="ECO:0000269" key="5">
    <source>
    </source>
</evidence>
<evidence type="ECO:0000269" key="6">
    <source>
    </source>
</evidence>
<evidence type="ECO:0000269" key="7">
    <source>
    </source>
</evidence>
<evidence type="ECO:0000269" key="8">
    <source>
    </source>
</evidence>
<evidence type="ECO:0000305" key="9"/>
<keyword id="KW-0938">Abscisic acid signaling pathway</keyword>
<keyword id="KW-0025">Alternative splicing</keyword>
<keyword id="KW-0067">ATP-binding</keyword>
<keyword id="KW-0418">Kinase</keyword>
<keyword id="KW-0547">Nucleotide-binding</keyword>
<keyword id="KW-1185">Reference proteome</keyword>
<keyword id="KW-0723">Serine/threonine-protein kinase</keyword>
<keyword id="KW-0808">Transferase</keyword>
<accession>Q39192</accession>
<accession>Q8LAA1</accession>
<accession>Q93ZE6</accession>
<reference key="1">
    <citation type="submission" date="1992-11" db="EMBL/GenBank/DDBJ databases">
        <title>Two new protein kinases in Arabidopsis.</title>
        <authorList>
            <person name="Gallois P."/>
        </authorList>
    </citation>
    <scope>NUCLEOTIDE SEQUENCE [MRNA]</scope>
    <source>
        <strain>cv. Columbia</strain>
    </source>
</reference>
<reference key="2">
    <citation type="journal article" date="2000" name="Nature">
        <title>Sequence and analysis of chromosome 3 of the plant Arabidopsis thaliana.</title>
        <authorList>
            <person name="Salanoubat M."/>
            <person name="Lemcke K."/>
            <person name="Rieger M."/>
            <person name="Ansorge W."/>
            <person name="Unseld M."/>
            <person name="Fartmann B."/>
            <person name="Valle G."/>
            <person name="Bloecker H."/>
            <person name="Perez-Alonso M."/>
            <person name="Obermaier B."/>
            <person name="Delseny M."/>
            <person name="Boutry M."/>
            <person name="Grivell L.A."/>
            <person name="Mache R."/>
            <person name="Puigdomenech P."/>
            <person name="De Simone V."/>
            <person name="Choisne N."/>
            <person name="Artiguenave F."/>
            <person name="Robert C."/>
            <person name="Brottier P."/>
            <person name="Wincker P."/>
            <person name="Cattolico L."/>
            <person name="Weissenbach J."/>
            <person name="Saurin W."/>
            <person name="Quetier F."/>
            <person name="Schaefer M."/>
            <person name="Mueller-Auer S."/>
            <person name="Gabel C."/>
            <person name="Fuchs M."/>
            <person name="Benes V."/>
            <person name="Wurmbach E."/>
            <person name="Drzonek H."/>
            <person name="Erfle H."/>
            <person name="Jordan N."/>
            <person name="Bangert S."/>
            <person name="Wiedelmann R."/>
            <person name="Kranz H."/>
            <person name="Voss H."/>
            <person name="Holland R."/>
            <person name="Brandt P."/>
            <person name="Nyakatura G."/>
            <person name="Vezzi A."/>
            <person name="D'Angelo M."/>
            <person name="Pallavicini A."/>
            <person name="Toppo S."/>
            <person name="Simionati B."/>
            <person name="Conrad A."/>
            <person name="Hornischer K."/>
            <person name="Kauer G."/>
            <person name="Loehnert T.-H."/>
            <person name="Nordsiek G."/>
            <person name="Reichelt J."/>
            <person name="Scharfe M."/>
            <person name="Schoen O."/>
            <person name="Bargues M."/>
            <person name="Terol J."/>
            <person name="Climent J."/>
            <person name="Navarro P."/>
            <person name="Collado C."/>
            <person name="Perez-Perez A."/>
            <person name="Ottenwaelder B."/>
            <person name="Duchemin D."/>
            <person name="Cooke R."/>
            <person name="Laudie M."/>
            <person name="Berger-Llauro C."/>
            <person name="Purnelle B."/>
            <person name="Masuy D."/>
            <person name="de Haan M."/>
            <person name="Maarse A.C."/>
            <person name="Alcaraz J.-P."/>
            <person name="Cottet A."/>
            <person name="Casacuberta E."/>
            <person name="Monfort A."/>
            <person name="Argiriou A."/>
            <person name="Flores M."/>
            <person name="Liguori R."/>
            <person name="Vitale D."/>
            <person name="Mannhaupt G."/>
            <person name="Haase D."/>
            <person name="Schoof H."/>
            <person name="Rudd S."/>
            <person name="Zaccaria P."/>
            <person name="Mewes H.-W."/>
            <person name="Mayer K.F.X."/>
            <person name="Kaul S."/>
            <person name="Town C.D."/>
            <person name="Koo H.L."/>
            <person name="Tallon L.J."/>
            <person name="Jenkins J."/>
            <person name="Rooney T."/>
            <person name="Rizzo M."/>
            <person name="Walts A."/>
            <person name="Utterback T."/>
            <person name="Fujii C.Y."/>
            <person name="Shea T.P."/>
            <person name="Creasy T.H."/>
            <person name="Haas B."/>
            <person name="Maiti R."/>
            <person name="Wu D."/>
            <person name="Peterson J."/>
            <person name="Van Aken S."/>
            <person name="Pai G."/>
            <person name="Militscher J."/>
            <person name="Sellers P."/>
            <person name="Gill J.E."/>
            <person name="Feldblyum T.V."/>
            <person name="Preuss D."/>
            <person name="Lin X."/>
            <person name="Nierman W.C."/>
            <person name="Salzberg S.L."/>
            <person name="White O."/>
            <person name="Venter J.C."/>
            <person name="Fraser C.M."/>
            <person name="Kaneko T."/>
            <person name="Nakamura Y."/>
            <person name="Sato S."/>
            <person name="Kato T."/>
            <person name="Asamizu E."/>
            <person name="Sasamoto S."/>
            <person name="Kimura T."/>
            <person name="Idesawa K."/>
            <person name="Kawashima K."/>
            <person name="Kishida Y."/>
            <person name="Kiyokawa C."/>
            <person name="Kohara M."/>
            <person name="Matsumoto M."/>
            <person name="Matsuno A."/>
            <person name="Muraki A."/>
            <person name="Nakayama S."/>
            <person name="Nakazaki N."/>
            <person name="Shinpo S."/>
            <person name="Takeuchi C."/>
            <person name="Wada T."/>
            <person name="Watanabe A."/>
            <person name="Yamada M."/>
            <person name="Yasuda M."/>
            <person name="Tabata S."/>
        </authorList>
    </citation>
    <scope>NUCLEOTIDE SEQUENCE [LARGE SCALE GENOMIC DNA]</scope>
    <source>
        <strain>cv. Columbia</strain>
    </source>
</reference>
<reference key="3">
    <citation type="journal article" date="2017" name="Plant J.">
        <title>Araport11: a complete reannotation of the Arabidopsis thaliana reference genome.</title>
        <authorList>
            <person name="Cheng C.Y."/>
            <person name="Krishnakumar V."/>
            <person name="Chan A.P."/>
            <person name="Thibaud-Nissen F."/>
            <person name="Schobel S."/>
            <person name="Town C.D."/>
        </authorList>
    </citation>
    <scope>GENOME REANNOTATION</scope>
    <source>
        <strain>cv. Columbia</strain>
    </source>
</reference>
<reference key="4">
    <citation type="journal article" date="2003" name="Science">
        <title>Empirical analysis of transcriptional activity in the Arabidopsis genome.</title>
        <authorList>
            <person name="Yamada K."/>
            <person name="Lim J."/>
            <person name="Dale J.M."/>
            <person name="Chen H."/>
            <person name="Shinn P."/>
            <person name="Palm C.J."/>
            <person name="Southwick A.M."/>
            <person name="Wu H.C."/>
            <person name="Kim C.J."/>
            <person name="Nguyen M."/>
            <person name="Pham P.K."/>
            <person name="Cheuk R.F."/>
            <person name="Karlin-Newmann G."/>
            <person name="Liu S.X."/>
            <person name="Lam B."/>
            <person name="Sakano H."/>
            <person name="Wu T."/>
            <person name="Yu G."/>
            <person name="Miranda M."/>
            <person name="Quach H.L."/>
            <person name="Tripp M."/>
            <person name="Chang C.H."/>
            <person name="Lee J.M."/>
            <person name="Toriumi M.J."/>
            <person name="Chan M.M."/>
            <person name="Tang C.C."/>
            <person name="Onodera C.S."/>
            <person name="Deng J.M."/>
            <person name="Akiyama K."/>
            <person name="Ansari Y."/>
            <person name="Arakawa T."/>
            <person name="Banh J."/>
            <person name="Banno F."/>
            <person name="Bowser L."/>
            <person name="Brooks S.Y."/>
            <person name="Carninci P."/>
            <person name="Chao Q."/>
            <person name="Choy N."/>
            <person name="Enju A."/>
            <person name="Goldsmith A.D."/>
            <person name="Gurjal M."/>
            <person name="Hansen N.F."/>
            <person name="Hayashizaki Y."/>
            <person name="Johnson-Hopson C."/>
            <person name="Hsuan V.W."/>
            <person name="Iida K."/>
            <person name="Karnes M."/>
            <person name="Khan S."/>
            <person name="Koesema E."/>
            <person name="Ishida J."/>
            <person name="Jiang P.X."/>
            <person name="Jones T."/>
            <person name="Kawai J."/>
            <person name="Kamiya A."/>
            <person name="Meyers C."/>
            <person name="Nakajima M."/>
            <person name="Narusaka M."/>
            <person name="Seki M."/>
            <person name="Sakurai T."/>
            <person name="Satou M."/>
            <person name="Tamse R."/>
            <person name="Vaysberg M."/>
            <person name="Wallender E.K."/>
            <person name="Wong C."/>
            <person name="Yamamura Y."/>
            <person name="Yuan S."/>
            <person name="Shinozaki K."/>
            <person name="Davis R.W."/>
            <person name="Theologis A."/>
            <person name="Ecker J.R."/>
        </authorList>
    </citation>
    <scope>NUCLEOTIDE SEQUENCE [LARGE SCALE MRNA]</scope>
    <source>
        <strain>cv. Columbia</strain>
    </source>
</reference>
<reference key="5">
    <citation type="submission" date="2006-04" db="EMBL/GenBank/DDBJ databases">
        <title>Arabidopsis ORF clones.</title>
        <authorList>
            <person name="Shinn P."/>
            <person name="Chen H."/>
            <person name="Kim C.J."/>
            <person name="Quinitio C."/>
            <person name="Ecker J.R."/>
        </authorList>
    </citation>
    <scope>NUCLEOTIDE SEQUENCE [LARGE SCALE MRNA]</scope>
    <source>
        <strain>cv. Columbia</strain>
    </source>
</reference>
<reference key="6">
    <citation type="submission" date="2002-03" db="EMBL/GenBank/DDBJ databases">
        <title>Full-length cDNA from Arabidopsis thaliana.</title>
        <authorList>
            <person name="Brover V.V."/>
            <person name="Troukhan M.E."/>
            <person name="Alexandrov N.A."/>
            <person name="Lu Y.-P."/>
            <person name="Flavell R.B."/>
            <person name="Feldmann K.A."/>
        </authorList>
    </citation>
    <scope>NUCLEOTIDE SEQUENCE [LARGE SCALE MRNA]</scope>
</reference>
<reference key="7">
    <citation type="journal article" date="2003" name="Plant Physiol.">
        <title>The Arabidopsis CDPK-SnRK superfamily of protein kinases.</title>
        <authorList>
            <person name="Hrabak E.M."/>
            <person name="Chan C.W.M."/>
            <person name="Gribskov M."/>
            <person name="Harper J.F."/>
            <person name="Choi J.H."/>
            <person name="Halford N."/>
            <person name="Kudla J."/>
            <person name="Luan S."/>
            <person name="Nimmo H.G."/>
            <person name="Sussman M.R."/>
            <person name="Thomas M."/>
            <person name="Walker-Simmons K."/>
            <person name="Zhu J.-K."/>
            <person name="Harmon A.C."/>
        </authorList>
    </citation>
    <scope>GENE FAMILY</scope>
    <scope>NOMENCLATURE</scope>
</reference>
<reference key="8">
    <citation type="journal article" date="2004" name="J. Biol. Chem.">
        <title>Identification of nine sucrose nonfermenting 1-related protein kinases 2 activated by hyperosmotic and saline stresses in Arabidopsis thaliana.</title>
        <authorList>
            <person name="Boudsocq M."/>
            <person name="Barbier-Brygoo H."/>
            <person name="Lauriere C."/>
        </authorList>
    </citation>
    <scope>TISSUE SPECIFICITY</scope>
    <scope>INDUCTION</scope>
</reference>
<reference key="9">
    <citation type="journal article" date="2006" name="J. Biol. Chem.">
        <title>The regulatory domain of SRK2E/OST1/SnRK2.6 interacts with ABI1 and integrates abscisic acid (ABA) and osmotic stress signals controlling stomatal closure in Arabidopsis.</title>
        <authorList>
            <person name="Yoshida R."/>
            <person name="Umezawa T."/>
            <person name="Mizoguchi T."/>
            <person name="Takahashi S."/>
            <person name="Takahashi F."/>
            <person name="Shinozaki K."/>
        </authorList>
    </citation>
    <scope>GENE FAMILY</scope>
    <scope>INDUCTION</scope>
</reference>
<reference key="10">
    <citation type="journal article" date="2007" name="Plant Cell">
        <title>Identification of two protein kinases required for abscisic acid regulation of seed germination, root growth, and gene expression in Arabidopsis.</title>
        <authorList>
            <person name="Fujii H."/>
            <person name="Verslues P.E."/>
            <person name="Zhu J.-K."/>
        </authorList>
    </citation>
    <scope>FUNCTION</scope>
    <scope>TISSUE SPECIFICITY</scope>
</reference>
<reference key="11">
    <citation type="journal article" date="2010" name="Plant J.">
        <title>PYR/PYL/RCAR family members are major in-vivo ABI1 protein phosphatase 2C-interacting proteins in Arabidopsis.</title>
        <authorList>
            <person name="Nishimura N."/>
            <person name="Sarkeshik A."/>
            <person name="Nito K."/>
            <person name="Park S.-Y."/>
            <person name="Wang A."/>
            <person name="Carvalho P.C."/>
            <person name="Lee S."/>
            <person name="Caddell D.F."/>
            <person name="Cutler S.R."/>
            <person name="Chory J."/>
            <person name="Yates J.R."/>
            <person name="Schroeder J.I."/>
        </authorList>
    </citation>
    <scope>INTERACTION WITH ABI1</scope>
</reference>
<reference key="12">
    <citation type="journal article" date="2016" name="PLoS Genet.">
        <title>Type one protein phosphatase 1 and its regulatory protein inhibitor 2 negatively regulate ABA signaling.</title>
        <authorList>
            <person name="Hou Y.J."/>
            <person name="Zhu Y."/>
            <person name="Wang P."/>
            <person name="Zhao Y."/>
            <person name="Xie S."/>
            <person name="Batelli G."/>
            <person name="Wang B."/>
            <person name="Duan C.G."/>
            <person name="Wang X."/>
            <person name="Xing L."/>
            <person name="Lei M."/>
            <person name="Yan J."/>
            <person name="Zhu X."/>
            <person name="Zhu J.K."/>
        </authorList>
    </citation>
    <scope>INTERACTION WITH I-2; TOPP1 AND TOPP2</scope>
</reference>
<reference key="13">
    <citation type="journal article" date="2019" name="Nat. Plants">
        <title>The plant ESCRT component FREE1 shuttles to the nucleus to attenuate abscisic acid signalling.</title>
        <authorList>
            <person name="Li H."/>
            <person name="Li Y."/>
            <person name="Zhao Q."/>
            <person name="Li T."/>
            <person name="Wei J."/>
            <person name="Li B."/>
            <person name="Shen W."/>
            <person name="Yang C."/>
            <person name="Zeng Y."/>
            <person name="Rodriguez P.L."/>
            <person name="Zhao Y."/>
            <person name="Jiang L."/>
            <person name="Wang X."/>
            <person name="Gao C."/>
        </authorList>
    </citation>
    <scope>FUNCTION</scope>
    <scope>INTERACTION WITH FREE1</scope>
</reference>
<feature type="chain" id="PRO_0000345159" description="Serine/threonine-protein kinase SRK2D">
    <location>
        <begin position="1"/>
        <end position="362"/>
    </location>
</feature>
<feature type="domain" description="Protein kinase" evidence="1">
    <location>
        <begin position="23"/>
        <end position="279"/>
    </location>
</feature>
<feature type="active site" description="Proton acceptor" evidence="1 2">
    <location>
        <position position="142"/>
    </location>
</feature>
<feature type="binding site" evidence="1">
    <location>
        <begin position="29"/>
        <end position="37"/>
    </location>
    <ligand>
        <name>ATP</name>
        <dbReference type="ChEBI" id="CHEBI:30616"/>
    </ligand>
</feature>
<feature type="binding site" evidence="1">
    <location>
        <position position="52"/>
    </location>
    <ligand>
        <name>ATP</name>
        <dbReference type="ChEBI" id="CHEBI:30616"/>
    </ligand>
</feature>
<feature type="sequence conflict" description="In Ref. 6; AAM65501." evidence="9" ref="6">
    <original>A</original>
    <variation>T</variation>
    <location>
        <position position="37"/>
    </location>
</feature>
<feature type="sequence conflict" description="In Ref. 6; AAM65501." evidence="9" ref="6">
    <original>Y</original>
    <variation>C</variation>
    <location>
        <position position="98"/>
    </location>
</feature>
<feature type="sequence conflict" description="In Ref. 6; AAM65501." evidence="9" ref="6">
    <original>R</original>
    <variation>Q</variation>
    <location>
        <position position="192"/>
    </location>
</feature>